<accession>Q1QBW0</accession>
<name>MSBA_PSYCK</name>
<gene>
    <name evidence="1" type="primary">msbA</name>
    <name type="ordered locus">Pcryo_1062</name>
</gene>
<proteinExistence type="inferred from homology"/>
<keyword id="KW-0067">ATP-binding</keyword>
<keyword id="KW-0997">Cell inner membrane</keyword>
<keyword id="KW-1003">Cell membrane</keyword>
<keyword id="KW-0445">Lipid transport</keyword>
<keyword id="KW-0472">Membrane</keyword>
<keyword id="KW-0547">Nucleotide-binding</keyword>
<keyword id="KW-1278">Translocase</keyword>
<keyword id="KW-0812">Transmembrane</keyword>
<keyword id="KW-1133">Transmembrane helix</keyword>
<keyword id="KW-0813">Transport</keyword>
<organism>
    <name type="scientific">Psychrobacter cryohalolentis (strain ATCC BAA-1226 / DSM 17306 / VKM B-2378 / K5)</name>
    <dbReference type="NCBI Taxonomy" id="335284"/>
    <lineage>
        <taxon>Bacteria</taxon>
        <taxon>Pseudomonadati</taxon>
        <taxon>Pseudomonadota</taxon>
        <taxon>Gammaproteobacteria</taxon>
        <taxon>Moraxellales</taxon>
        <taxon>Moraxellaceae</taxon>
        <taxon>Psychrobacter</taxon>
    </lineage>
</organism>
<dbReference type="EC" id="7.5.2.6" evidence="1"/>
<dbReference type="EMBL" id="CP000323">
    <property type="protein sequence ID" value="ABE74843.1"/>
    <property type="molecule type" value="Genomic_DNA"/>
</dbReference>
<dbReference type="RefSeq" id="WP_011513399.1">
    <property type="nucleotide sequence ID" value="NC_007969.1"/>
</dbReference>
<dbReference type="SMR" id="Q1QBW0"/>
<dbReference type="STRING" id="335284.Pcryo_1062"/>
<dbReference type="KEGG" id="pcr:Pcryo_1062"/>
<dbReference type="eggNOG" id="COG1132">
    <property type="taxonomic scope" value="Bacteria"/>
</dbReference>
<dbReference type="HOGENOM" id="CLU_000604_84_3_6"/>
<dbReference type="Proteomes" id="UP000002425">
    <property type="component" value="Chromosome"/>
</dbReference>
<dbReference type="GO" id="GO:0005886">
    <property type="term" value="C:plasma membrane"/>
    <property type="evidence" value="ECO:0007669"/>
    <property type="project" value="UniProtKB-SubCell"/>
</dbReference>
<dbReference type="GO" id="GO:0015421">
    <property type="term" value="F:ABC-type oligopeptide transporter activity"/>
    <property type="evidence" value="ECO:0007669"/>
    <property type="project" value="TreeGrafter"/>
</dbReference>
<dbReference type="GO" id="GO:0005524">
    <property type="term" value="F:ATP binding"/>
    <property type="evidence" value="ECO:0007669"/>
    <property type="project" value="UniProtKB-KW"/>
</dbReference>
<dbReference type="GO" id="GO:0016887">
    <property type="term" value="F:ATP hydrolysis activity"/>
    <property type="evidence" value="ECO:0007669"/>
    <property type="project" value="InterPro"/>
</dbReference>
<dbReference type="GO" id="GO:0034040">
    <property type="term" value="F:ATPase-coupled lipid transmembrane transporter activity"/>
    <property type="evidence" value="ECO:0007669"/>
    <property type="project" value="InterPro"/>
</dbReference>
<dbReference type="CDD" id="cd18552">
    <property type="entry name" value="ABC_6TM_MsbA_like"/>
    <property type="match status" value="1"/>
</dbReference>
<dbReference type="FunFam" id="3.40.50.300:FF:000218">
    <property type="entry name" value="Multidrug ABC transporter ATP-binding protein"/>
    <property type="match status" value="1"/>
</dbReference>
<dbReference type="Gene3D" id="1.20.1560.10">
    <property type="entry name" value="ABC transporter type 1, transmembrane domain"/>
    <property type="match status" value="1"/>
</dbReference>
<dbReference type="Gene3D" id="3.40.50.300">
    <property type="entry name" value="P-loop containing nucleotide triphosphate hydrolases"/>
    <property type="match status" value="1"/>
</dbReference>
<dbReference type="InterPro" id="IPR003593">
    <property type="entry name" value="AAA+_ATPase"/>
</dbReference>
<dbReference type="InterPro" id="IPR011527">
    <property type="entry name" value="ABC1_TM_dom"/>
</dbReference>
<dbReference type="InterPro" id="IPR036640">
    <property type="entry name" value="ABC1_TM_sf"/>
</dbReference>
<dbReference type="InterPro" id="IPR003439">
    <property type="entry name" value="ABC_transporter-like_ATP-bd"/>
</dbReference>
<dbReference type="InterPro" id="IPR017871">
    <property type="entry name" value="ABC_transporter-like_CS"/>
</dbReference>
<dbReference type="InterPro" id="IPR011917">
    <property type="entry name" value="ABC_transpr_lipidA"/>
</dbReference>
<dbReference type="InterPro" id="IPR027417">
    <property type="entry name" value="P-loop_NTPase"/>
</dbReference>
<dbReference type="InterPro" id="IPR039421">
    <property type="entry name" value="Type_1_exporter"/>
</dbReference>
<dbReference type="NCBIfam" id="TIGR02203">
    <property type="entry name" value="MsbA_lipidA"/>
    <property type="match status" value="1"/>
</dbReference>
<dbReference type="PANTHER" id="PTHR43394:SF1">
    <property type="entry name" value="ATP-BINDING CASSETTE SUB-FAMILY B MEMBER 10, MITOCHONDRIAL"/>
    <property type="match status" value="1"/>
</dbReference>
<dbReference type="PANTHER" id="PTHR43394">
    <property type="entry name" value="ATP-DEPENDENT PERMEASE MDL1, MITOCHONDRIAL"/>
    <property type="match status" value="1"/>
</dbReference>
<dbReference type="Pfam" id="PF00664">
    <property type="entry name" value="ABC_membrane"/>
    <property type="match status" value="1"/>
</dbReference>
<dbReference type="Pfam" id="PF00005">
    <property type="entry name" value="ABC_tran"/>
    <property type="match status" value="1"/>
</dbReference>
<dbReference type="SMART" id="SM00382">
    <property type="entry name" value="AAA"/>
    <property type="match status" value="1"/>
</dbReference>
<dbReference type="SUPFAM" id="SSF90123">
    <property type="entry name" value="ABC transporter transmembrane region"/>
    <property type="match status" value="1"/>
</dbReference>
<dbReference type="SUPFAM" id="SSF52540">
    <property type="entry name" value="P-loop containing nucleoside triphosphate hydrolases"/>
    <property type="match status" value="1"/>
</dbReference>
<dbReference type="PROSITE" id="PS50929">
    <property type="entry name" value="ABC_TM1F"/>
    <property type="match status" value="1"/>
</dbReference>
<dbReference type="PROSITE" id="PS00211">
    <property type="entry name" value="ABC_TRANSPORTER_1"/>
    <property type="match status" value="1"/>
</dbReference>
<dbReference type="PROSITE" id="PS50893">
    <property type="entry name" value="ABC_TRANSPORTER_2"/>
    <property type="match status" value="1"/>
</dbReference>
<dbReference type="PROSITE" id="PS51239">
    <property type="entry name" value="MSBA"/>
    <property type="match status" value="1"/>
</dbReference>
<reference key="1">
    <citation type="submission" date="2006-03" db="EMBL/GenBank/DDBJ databases">
        <title>Complete sequence of chromosome of Psychrobacter cryohalolentis K5.</title>
        <authorList>
            <consortium name="US DOE Joint Genome Institute"/>
            <person name="Copeland A."/>
            <person name="Lucas S."/>
            <person name="Lapidus A."/>
            <person name="Barry K."/>
            <person name="Detter J.C."/>
            <person name="Glavina T."/>
            <person name="Hammon N."/>
            <person name="Israni S."/>
            <person name="Dalin E."/>
            <person name="Tice H."/>
            <person name="Pitluck S."/>
            <person name="Brettin T."/>
            <person name="Bruce D."/>
            <person name="Han C."/>
            <person name="Tapia R."/>
            <person name="Sims D.R."/>
            <person name="Gilna P."/>
            <person name="Schmutz J."/>
            <person name="Larimer F."/>
            <person name="Land M."/>
            <person name="Hauser L."/>
            <person name="Kyrpides N."/>
            <person name="Kim E."/>
            <person name="Richardson P."/>
        </authorList>
    </citation>
    <scope>NUCLEOTIDE SEQUENCE [LARGE SCALE GENOMIC DNA]</scope>
    <source>
        <strain>ATCC BAA-1226 / DSM 17306 / VKM B-2378 / K5</strain>
    </source>
</reference>
<evidence type="ECO:0000255" key="1">
    <source>
        <dbReference type="HAMAP-Rule" id="MF_01703"/>
    </source>
</evidence>
<evidence type="ECO:0000256" key="2">
    <source>
        <dbReference type="SAM" id="MobiDB-lite"/>
    </source>
</evidence>
<protein>
    <recommendedName>
        <fullName evidence="1">ATP-dependent lipid A-core flippase</fullName>
        <ecNumber evidence="1">7.5.2.6</ecNumber>
    </recommendedName>
    <alternativeName>
        <fullName evidence="1">Lipid A export ATP-binding/permease protein MsbA</fullName>
    </alternativeName>
</protein>
<sequence length="598" mass="65885">MSQAYQPDSTKTSAKTPVAPTVATLNPPKRKTLMRLLAYLKPYWWAILLTIIGFAINAATEIWIAKLLQYITDAINQNDQSKQDLFPFIIVMLFFVRGVGSFLGNYYTALVSRNLVYELRVEVFNKLLRLPSSFYLANPAGTISSKLIFDVEQVTAASTDSMKTLLRDGLTVVALMGFLLYSNWRLTLILFVVLPPILWLIRVASKRYLKLSKGIQETMGDVSHITNEVINGYQVVKNYGGQVYESKRFDVTSKKNLRQGMKVVVTNSINTPAVQLLMAMAMAVVVWLALRPAVIDDISAGQFISYIAAAGLLSKPVRSLTDVNQQLQRGLAAGESIFALLDEPEEADTGVLSPTLAGEIKLDNVSLVYPDSTVALHDFNLDIRAGETVALVGRSGAGKSSLVNLLTRTLTTSSGQITLDGMPIEDIKLESLRAQIAMVNQQVVLFNTTVFNNIAYGSLAHKTPAEVEQAAKDAFAHDFIMQMPNGYQSEIGAEGLQLSGGQRQRLSIARALLKDAPILILDEATSALDNESEYYIQKALDNIMKNRTTLVIAHRLTTIESADRIAVLDGGQIVELGTHTQLMQLHGHYAQMYARDFE</sequence>
<comment type="function">
    <text evidence="1">Involved in lipopolysaccharide (LPS) biosynthesis. Translocates lipid A-core from the inner to the outer leaflet of the inner membrane. Transmembrane domains (TMD) form a pore in the inner membrane and the ATP-binding domain (NBD) is responsible for energy generation.</text>
</comment>
<comment type="catalytic activity">
    <reaction evidence="1">
        <text>ATP + H2O + lipid A-core oligosaccharideSide 1 = ADP + phosphate + lipid A-core oligosaccharideSide 2.</text>
        <dbReference type="EC" id="7.5.2.6"/>
    </reaction>
</comment>
<comment type="subunit">
    <text evidence="1">Homodimer.</text>
</comment>
<comment type="subcellular location">
    <subcellularLocation>
        <location evidence="1">Cell inner membrane</location>
        <topology evidence="1">Multi-pass membrane protein</topology>
    </subcellularLocation>
</comment>
<comment type="domain">
    <text evidence="1">In MsbA the ATP-binding domain (NBD) and the transmembrane domain (TMD) are fused.</text>
</comment>
<comment type="similarity">
    <text evidence="1">Belongs to the ABC transporter superfamily. Lipid exporter (TC 3.A.1.106) family.</text>
</comment>
<feature type="chain" id="PRO_0000271645" description="ATP-dependent lipid A-core flippase">
    <location>
        <begin position="1"/>
        <end position="598"/>
    </location>
</feature>
<feature type="transmembrane region" description="Helical" evidence="1">
    <location>
        <begin position="44"/>
        <end position="64"/>
    </location>
</feature>
<feature type="transmembrane region" description="Helical" evidence="1">
    <location>
        <begin position="85"/>
        <end position="105"/>
    </location>
</feature>
<feature type="transmembrane region" description="Helical" evidence="1">
    <location>
        <begin position="172"/>
        <end position="192"/>
    </location>
</feature>
<feature type="transmembrane region" description="Helical" evidence="1">
    <location>
        <begin position="269"/>
        <end position="289"/>
    </location>
</feature>
<feature type="domain" description="ABC transmembrane type-1" evidence="1">
    <location>
        <begin position="48"/>
        <end position="329"/>
    </location>
</feature>
<feature type="domain" description="ABC transporter" evidence="1">
    <location>
        <begin position="360"/>
        <end position="595"/>
    </location>
</feature>
<feature type="region of interest" description="Disordered" evidence="2">
    <location>
        <begin position="1"/>
        <end position="21"/>
    </location>
</feature>
<feature type="compositionally biased region" description="Polar residues" evidence="2">
    <location>
        <begin position="1"/>
        <end position="15"/>
    </location>
</feature>
<feature type="binding site" evidence="1">
    <location>
        <begin position="393"/>
        <end position="400"/>
    </location>
    <ligand>
        <name>ATP</name>
        <dbReference type="ChEBI" id="CHEBI:30616"/>
    </ligand>
</feature>